<gene>
    <name evidence="1" type="primary">speE</name>
    <name type="ordered locus">TON_1322</name>
</gene>
<reference key="1">
    <citation type="journal article" date="2008" name="J. Bacteriol.">
        <title>The complete genome sequence of Thermococcus onnurineus NA1 reveals a mixed heterotrophic and carboxydotrophic metabolism.</title>
        <authorList>
            <person name="Lee H.S."/>
            <person name="Kang S.G."/>
            <person name="Bae S.S."/>
            <person name="Lim J.K."/>
            <person name="Cho Y."/>
            <person name="Kim Y.J."/>
            <person name="Jeon J.H."/>
            <person name="Cha S.-S."/>
            <person name="Kwon K.K."/>
            <person name="Kim H.-T."/>
            <person name="Park C.-J."/>
            <person name="Lee H.-W."/>
            <person name="Kim S.I."/>
            <person name="Chun J."/>
            <person name="Colwell R.R."/>
            <person name="Kim S.-J."/>
            <person name="Lee J.-H."/>
        </authorList>
    </citation>
    <scope>NUCLEOTIDE SEQUENCE [LARGE SCALE GENOMIC DNA]</scope>
    <source>
        <strain>NA1</strain>
    </source>
</reference>
<comment type="function">
    <text evidence="1">Catalyzes the irreversible transfer of a propylamine group from the amino donor S-adenosylmethioninamine (decarboxy-AdoMet) to putrescine (1,4-diaminobutane) to yield spermidine.</text>
</comment>
<comment type="catalytic activity">
    <reaction evidence="1">
        <text>S-adenosyl 3-(methylsulfanyl)propylamine + putrescine = S-methyl-5'-thioadenosine + spermidine + H(+)</text>
        <dbReference type="Rhea" id="RHEA:12721"/>
        <dbReference type="ChEBI" id="CHEBI:15378"/>
        <dbReference type="ChEBI" id="CHEBI:17509"/>
        <dbReference type="ChEBI" id="CHEBI:57443"/>
        <dbReference type="ChEBI" id="CHEBI:57834"/>
        <dbReference type="ChEBI" id="CHEBI:326268"/>
        <dbReference type="EC" id="2.5.1.16"/>
    </reaction>
</comment>
<comment type="pathway">
    <text evidence="1">Amine and polyamine biosynthesis; spermidine biosynthesis; spermidine from putrescine: step 1/1.</text>
</comment>
<comment type="subunit">
    <text evidence="1">Homodimer or homotetramer.</text>
</comment>
<comment type="subcellular location">
    <subcellularLocation>
        <location evidence="1">Cytoplasm</location>
    </subcellularLocation>
</comment>
<comment type="similarity">
    <text evidence="1">Belongs to the spermidine/spermine synthase family.</text>
</comment>
<dbReference type="EC" id="2.5.1.16" evidence="1"/>
<dbReference type="EMBL" id="CP000855">
    <property type="protein sequence ID" value="ACJ16812.1"/>
    <property type="molecule type" value="Genomic_DNA"/>
</dbReference>
<dbReference type="RefSeq" id="WP_012572284.1">
    <property type="nucleotide sequence ID" value="NC_011529.1"/>
</dbReference>
<dbReference type="SMR" id="B6YXJ9"/>
<dbReference type="STRING" id="523850.TON_1322"/>
<dbReference type="GeneID" id="7018350"/>
<dbReference type="KEGG" id="ton:TON_1322"/>
<dbReference type="PATRIC" id="fig|523850.10.peg.1330"/>
<dbReference type="eggNOG" id="arCOG00050">
    <property type="taxonomic scope" value="Archaea"/>
</dbReference>
<dbReference type="HOGENOM" id="CLU_048199_1_0_2"/>
<dbReference type="OrthoDB" id="10538at2157"/>
<dbReference type="UniPathway" id="UPA00248">
    <property type="reaction ID" value="UER00314"/>
</dbReference>
<dbReference type="Proteomes" id="UP000002727">
    <property type="component" value="Chromosome"/>
</dbReference>
<dbReference type="GO" id="GO:0005737">
    <property type="term" value="C:cytoplasm"/>
    <property type="evidence" value="ECO:0007669"/>
    <property type="project" value="UniProtKB-SubCell"/>
</dbReference>
<dbReference type="GO" id="GO:0004766">
    <property type="term" value="F:spermidine synthase activity"/>
    <property type="evidence" value="ECO:0007669"/>
    <property type="project" value="UniProtKB-UniRule"/>
</dbReference>
<dbReference type="GO" id="GO:0008295">
    <property type="term" value="P:spermidine biosynthetic process"/>
    <property type="evidence" value="ECO:0007669"/>
    <property type="project" value="UniProtKB-UniRule"/>
</dbReference>
<dbReference type="CDD" id="cd02440">
    <property type="entry name" value="AdoMet_MTases"/>
    <property type="match status" value="1"/>
</dbReference>
<dbReference type="Gene3D" id="2.30.140.10">
    <property type="entry name" value="Spermidine synthase, tetramerisation domain"/>
    <property type="match status" value="1"/>
</dbReference>
<dbReference type="Gene3D" id="3.40.50.150">
    <property type="entry name" value="Vaccinia Virus protein VP39"/>
    <property type="match status" value="1"/>
</dbReference>
<dbReference type="HAMAP" id="MF_00198">
    <property type="entry name" value="Spermidine_synth"/>
    <property type="match status" value="1"/>
</dbReference>
<dbReference type="InterPro" id="IPR030374">
    <property type="entry name" value="PABS"/>
</dbReference>
<dbReference type="InterPro" id="IPR030373">
    <property type="entry name" value="PABS_CS"/>
</dbReference>
<dbReference type="InterPro" id="IPR029063">
    <property type="entry name" value="SAM-dependent_MTases_sf"/>
</dbReference>
<dbReference type="InterPro" id="IPR001045">
    <property type="entry name" value="Spermi_synthase"/>
</dbReference>
<dbReference type="InterPro" id="IPR035246">
    <property type="entry name" value="Spermidine_synt_N"/>
</dbReference>
<dbReference type="InterPro" id="IPR037163">
    <property type="entry name" value="Spermidine_synt_N_sf"/>
</dbReference>
<dbReference type="NCBIfam" id="NF002010">
    <property type="entry name" value="PRK00811.1"/>
    <property type="match status" value="1"/>
</dbReference>
<dbReference type="NCBIfam" id="TIGR00417">
    <property type="entry name" value="speE"/>
    <property type="match status" value="1"/>
</dbReference>
<dbReference type="PANTHER" id="PTHR11558:SF11">
    <property type="entry name" value="SPERMIDINE SYNTHASE"/>
    <property type="match status" value="1"/>
</dbReference>
<dbReference type="PANTHER" id="PTHR11558">
    <property type="entry name" value="SPERMIDINE/SPERMINE SYNTHASE"/>
    <property type="match status" value="1"/>
</dbReference>
<dbReference type="Pfam" id="PF17284">
    <property type="entry name" value="Spermine_synt_N"/>
    <property type="match status" value="1"/>
</dbReference>
<dbReference type="Pfam" id="PF01564">
    <property type="entry name" value="Spermine_synth"/>
    <property type="match status" value="1"/>
</dbReference>
<dbReference type="SUPFAM" id="SSF53335">
    <property type="entry name" value="S-adenosyl-L-methionine-dependent methyltransferases"/>
    <property type="match status" value="1"/>
</dbReference>
<dbReference type="PROSITE" id="PS01330">
    <property type="entry name" value="PABS_1"/>
    <property type="match status" value="1"/>
</dbReference>
<dbReference type="PROSITE" id="PS51006">
    <property type="entry name" value="PABS_2"/>
    <property type="match status" value="1"/>
</dbReference>
<keyword id="KW-0963">Cytoplasm</keyword>
<keyword id="KW-0620">Polyamine biosynthesis</keyword>
<keyword id="KW-0745">Spermidine biosynthesis</keyword>
<keyword id="KW-0808">Transferase</keyword>
<evidence type="ECO:0000255" key="1">
    <source>
        <dbReference type="HAMAP-Rule" id="MF_00198"/>
    </source>
</evidence>
<proteinExistence type="inferred from homology"/>
<sequence>MGFNEQENAFIEWYPRGYGVGFRVKERLFETQTKYQRLELYETEGFGKLLVLDGTVQLVEMGEESYHEPLVHPVMLAHPNPRRVLIIGGGDGGTLREVLRHKTVEKAIMVEIDEMVIEVSRIYMNVARGAFEDPRAELIVSDGVEYLKNTDEKFDVIIVDSTDPVGPAKMLFSEGFFRNAYEKLNDNGLYITQAGSVYLFTNELLDAYRDMGKVFDEVHYFSFPVIGYASPWSFLVGVKGDINFRKVDLQRAKELKLYYYDPERHETLFQMPKYVRELLEKV</sequence>
<feature type="chain" id="PRO_1000099305" description="Polyamine aminopropyltransferase">
    <location>
        <begin position="1"/>
        <end position="282"/>
    </location>
</feature>
<feature type="domain" description="PABS" evidence="1">
    <location>
        <begin position="11"/>
        <end position="239"/>
    </location>
</feature>
<feature type="active site" description="Proton acceptor" evidence="1">
    <location>
        <position position="160"/>
    </location>
</feature>
<feature type="binding site" evidence="1">
    <location>
        <position position="36"/>
    </location>
    <ligand>
        <name>S-methyl-5'-thioadenosine</name>
        <dbReference type="ChEBI" id="CHEBI:17509"/>
    </ligand>
</feature>
<feature type="binding site" evidence="1">
    <location>
        <position position="67"/>
    </location>
    <ligand>
        <name>spermidine</name>
        <dbReference type="ChEBI" id="CHEBI:57834"/>
    </ligand>
</feature>
<feature type="binding site" evidence="1">
    <location>
        <position position="91"/>
    </location>
    <ligand>
        <name>spermidine</name>
        <dbReference type="ChEBI" id="CHEBI:57834"/>
    </ligand>
</feature>
<feature type="binding site" evidence="1">
    <location>
        <position position="111"/>
    </location>
    <ligand>
        <name>S-methyl-5'-thioadenosine</name>
        <dbReference type="ChEBI" id="CHEBI:17509"/>
    </ligand>
</feature>
<feature type="binding site" evidence="1">
    <location>
        <begin position="142"/>
        <end position="143"/>
    </location>
    <ligand>
        <name>S-methyl-5'-thioadenosine</name>
        <dbReference type="ChEBI" id="CHEBI:17509"/>
    </ligand>
</feature>
<feature type="binding site" evidence="1">
    <location>
        <begin position="160"/>
        <end position="163"/>
    </location>
    <ligand>
        <name>spermidine</name>
        <dbReference type="ChEBI" id="CHEBI:57834"/>
    </ligand>
</feature>
<feature type="binding site" evidence="1">
    <location>
        <position position="167"/>
    </location>
    <ligand>
        <name>S-methyl-5'-thioadenosine</name>
        <dbReference type="ChEBI" id="CHEBI:17509"/>
    </ligand>
</feature>
<protein>
    <recommendedName>
        <fullName evidence="1">Polyamine aminopropyltransferase</fullName>
    </recommendedName>
    <alternativeName>
        <fullName evidence="1">Putrescine aminopropyltransferase</fullName>
        <shortName evidence="1">PAPT</shortName>
    </alternativeName>
    <alternativeName>
        <fullName evidence="1">Spermidine synthase</fullName>
        <shortName evidence="1">SPDS</shortName>
        <shortName evidence="1">SPDSY</shortName>
        <ecNumber evidence="1">2.5.1.16</ecNumber>
    </alternativeName>
</protein>
<accession>B6YXJ9</accession>
<name>SPEE_THEON</name>
<organism>
    <name type="scientific">Thermococcus onnurineus (strain NA1)</name>
    <dbReference type="NCBI Taxonomy" id="523850"/>
    <lineage>
        <taxon>Archaea</taxon>
        <taxon>Methanobacteriati</taxon>
        <taxon>Methanobacteriota</taxon>
        <taxon>Thermococci</taxon>
        <taxon>Thermococcales</taxon>
        <taxon>Thermococcaceae</taxon>
        <taxon>Thermococcus</taxon>
    </lineage>
</organism>